<keyword id="KW-0240">DNA-directed RNA polymerase</keyword>
<keyword id="KW-0548">Nucleotidyltransferase</keyword>
<keyword id="KW-0804">Transcription</keyword>
<keyword id="KW-0808">Transferase</keyword>
<accession>A1RPI1</accession>
<protein>
    <recommendedName>
        <fullName evidence="1">DNA-directed RNA polymerase subunit omega</fullName>
        <shortName evidence="1">RNAP omega subunit</shortName>
        <ecNumber evidence="1">2.7.7.6</ecNumber>
    </recommendedName>
    <alternativeName>
        <fullName evidence="1">RNA polymerase omega subunit</fullName>
    </alternativeName>
    <alternativeName>
        <fullName evidence="1">Transcriptase subunit omega</fullName>
    </alternativeName>
</protein>
<evidence type="ECO:0000255" key="1">
    <source>
        <dbReference type="HAMAP-Rule" id="MF_00366"/>
    </source>
</evidence>
<reference key="1">
    <citation type="submission" date="2006-12" db="EMBL/GenBank/DDBJ databases">
        <title>Complete sequence of Shewanella sp. W3-18-1.</title>
        <authorList>
            <consortium name="US DOE Joint Genome Institute"/>
            <person name="Copeland A."/>
            <person name="Lucas S."/>
            <person name="Lapidus A."/>
            <person name="Barry K."/>
            <person name="Detter J.C."/>
            <person name="Glavina del Rio T."/>
            <person name="Hammon N."/>
            <person name="Israni S."/>
            <person name="Dalin E."/>
            <person name="Tice H."/>
            <person name="Pitluck S."/>
            <person name="Chain P."/>
            <person name="Malfatti S."/>
            <person name="Shin M."/>
            <person name="Vergez L."/>
            <person name="Schmutz J."/>
            <person name="Larimer F."/>
            <person name="Land M."/>
            <person name="Hauser L."/>
            <person name="Kyrpides N."/>
            <person name="Lykidis A."/>
            <person name="Tiedje J."/>
            <person name="Richardson P."/>
        </authorList>
    </citation>
    <scope>NUCLEOTIDE SEQUENCE [LARGE SCALE GENOMIC DNA]</scope>
    <source>
        <strain>W3-18-1</strain>
    </source>
</reference>
<dbReference type="EC" id="2.7.7.6" evidence="1"/>
<dbReference type="EMBL" id="CP000503">
    <property type="protein sequence ID" value="ABM26576.1"/>
    <property type="molecule type" value="Genomic_DNA"/>
</dbReference>
<dbReference type="RefSeq" id="WP_007651394.1">
    <property type="nucleotide sequence ID" value="NC_008750.1"/>
</dbReference>
<dbReference type="SMR" id="A1RPI1"/>
<dbReference type="GeneID" id="67445125"/>
<dbReference type="KEGG" id="shw:Sputw3181_3771"/>
<dbReference type="HOGENOM" id="CLU_125406_5_3_6"/>
<dbReference type="Proteomes" id="UP000002597">
    <property type="component" value="Chromosome"/>
</dbReference>
<dbReference type="GO" id="GO:0000428">
    <property type="term" value="C:DNA-directed RNA polymerase complex"/>
    <property type="evidence" value="ECO:0007669"/>
    <property type="project" value="UniProtKB-KW"/>
</dbReference>
<dbReference type="GO" id="GO:0003677">
    <property type="term" value="F:DNA binding"/>
    <property type="evidence" value="ECO:0007669"/>
    <property type="project" value="UniProtKB-UniRule"/>
</dbReference>
<dbReference type="GO" id="GO:0003899">
    <property type="term" value="F:DNA-directed RNA polymerase activity"/>
    <property type="evidence" value="ECO:0007669"/>
    <property type="project" value="UniProtKB-UniRule"/>
</dbReference>
<dbReference type="GO" id="GO:0006351">
    <property type="term" value="P:DNA-templated transcription"/>
    <property type="evidence" value="ECO:0007669"/>
    <property type="project" value="UniProtKB-UniRule"/>
</dbReference>
<dbReference type="Gene3D" id="3.90.940.10">
    <property type="match status" value="1"/>
</dbReference>
<dbReference type="HAMAP" id="MF_00366">
    <property type="entry name" value="RNApol_bact_RpoZ"/>
    <property type="match status" value="1"/>
</dbReference>
<dbReference type="InterPro" id="IPR003716">
    <property type="entry name" value="DNA-dir_RNA_pol_omega"/>
</dbReference>
<dbReference type="InterPro" id="IPR006110">
    <property type="entry name" value="Pol_omega/Rpo6/RPB6"/>
</dbReference>
<dbReference type="InterPro" id="IPR036161">
    <property type="entry name" value="RPB6/omega-like_sf"/>
</dbReference>
<dbReference type="NCBIfam" id="TIGR00690">
    <property type="entry name" value="rpoZ"/>
    <property type="match status" value="1"/>
</dbReference>
<dbReference type="PANTHER" id="PTHR34476">
    <property type="entry name" value="DNA-DIRECTED RNA POLYMERASE SUBUNIT OMEGA"/>
    <property type="match status" value="1"/>
</dbReference>
<dbReference type="PANTHER" id="PTHR34476:SF1">
    <property type="entry name" value="DNA-DIRECTED RNA POLYMERASE SUBUNIT OMEGA"/>
    <property type="match status" value="1"/>
</dbReference>
<dbReference type="Pfam" id="PF01192">
    <property type="entry name" value="RNA_pol_Rpb6"/>
    <property type="match status" value="1"/>
</dbReference>
<dbReference type="SMART" id="SM01409">
    <property type="entry name" value="RNA_pol_Rpb6"/>
    <property type="match status" value="1"/>
</dbReference>
<dbReference type="SUPFAM" id="SSF63562">
    <property type="entry name" value="RPB6/omega subunit-like"/>
    <property type="match status" value="1"/>
</dbReference>
<proteinExistence type="inferred from homology"/>
<gene>
    <name evidence="1" type="primary">rpoZ</name>
    <name type="ordered locus">Sputw3181_3771</name>
</gene>
<sequence length="92" mass="10125">MARVTVEDAVEQIGNRFDMILVAARRARQIAVQGKDPMVEEMNDKPTVIALREIELGLVNAHTLDADERQTVREREAAEIAAVAAIAEGRSL</sequence>
<comment type="function">
    <text evidence="1">Promotes RNA polymerase assembly. Latches the N- and C-terminal regions of the beta' subunit thereby facilitating its interaction with the beta and alpha subunits.</text>
</comment>
<comment type="catalytic activity">
    <reaction evidence="1">
        <text>RNA(n) + a ribonucleoside 5'-triphosphate = RNA(n+1) + diphosphate</text>
        <dbReference type="Rhea" id="RHEA:21248"/>
        <dbReference type="Rhea" id="RHEA-COMP:14527"/>
        <dbReference type="Rhea" id="RHEA-COMP:17342"/>
        <dbReference type="ChEBI" id="CHEBI:33019"/>
        <dbReference type="ChEBI" id="CHEBI:61557"/>
        <dbReference type="ChEBI" id="CHEBI:140395"/>
        <dbReference type="EC" id="2.7.7.6"/>
    </reaction>
</comment>
<comment type="subunit">
    <text evidence="1">The RNAP catalytic core consists of 2 alpha, 1 beta, 1 beta' and 1 omega subunit. When a sigma factor is associated with the core the holoenzyme is formed, which can initiate transcription.</text>
</comment>
<comment type="similarity">
    <text evidence="1">Belongs to the RNA polymerase subunit omega family.</text>
</comment>
<feature type="chain" id="PRO_1000006016" description="DNA-directed RNA polymerase subunit omega">
    <location>
        <begin position="1"/>
        <end position="92"/>
    </location>
</feature>
<organism>
    <name type="scientific">Shewanella sp. (strain W3-18-1)</name>
    <dbReference type="NCBI Taxonomy" id="351745"/>
    <lineage>
        <taxon>Bacteria</taxon>
        <taxon>Pseudomonadati</taxon>
        <taxon>Pseudomonadota</taxon>
        <taxon>Gammaproteobacteria</taxon>
        <taxon>Alteromonadales</taxon>
        <taxon>Shewanellaceae</taxon>
        <taxon>Shewanella</taxon>
    </lineage>
</organism>
<name>RPOZ_SHESW</name>